<sequence>MAYRKLGRTSSQRKAMLRDLTTDLLINESIVTTEARAKEIRKTVEKMITLGKRGDLHARRQAAAYVRNEIASENYDEATDKYTSTTALQKLFSEIAPRYAERNGGYTRILKTEPRRGDAAPMAIIELV</sequence>
<evidence type="ECO:0000255" key="1">
    <source>
        <dbReference type="HAMAP-Rule" id="MF_01368"/>
    </source>
</evidence>
<evidence type="ECO:0000305" key="2"/>
<proteinExistence type="inferred from homology"/>
<name>RL17_STRPC</name>
<feature type="chain" id="PRO_1000055962" description="Large ribosomal subunit protein bL17">
    <location>
        <begin position="1"/>
        <end position="128"/>
    </location>
</feature>
<comment type="subunit">
    <text evidence="1">Part of the 50S ribosomal subunit. Contacts protein L32.</text>
</comment>
<comment type="similarity">
    <text evidence="1">Belongs to the bacterial ribosomal protein bL17 family.</text>
</comment>
<keyword id="KW-0687">Ribonucleoprotein</keyword>
<keyword id="KW-0689">Ribosomal protein</keyword>
<gene>
    <name evidence="1" type="primary">rplQ</name>
    <name type="ordered locus">MGAS9429_Spy0071</name>
</gene>
<dbReference type="EMBL" id="CP000259">
    <property type="protein sequence ID" value="ABF31259.1"/>
    <property type="molecule type" value="Genomic_DNA"/>
</dbReference>
<dbReference type="RefSeq" id="WP_002986602.1">
    <property type="nucleotide sequence ID" value="NC_008021.1"/>
</dbReference>
<dbReference type="SMR" id="Q1JNZ0"/>
<dbReference type="GeneID" id="83703931"/>
<dbReference type="KEGG" id="spk:MGAS9429_Spy0071"/>
<dbReference type="HOGENOM" id="CLU_074407_2_2_9"/>
<dbReference type="Proteomes" id="UP000002433">
    <property type="component" value="Chromosome"/>
</dbReference>
<dbReference type="GO" id="GO:0022625">
    <property type="term" value="C:cytosolic large ribosomal subunit"/>
    <property type="evidence" value="ECO:0007669"/>
    <property type="project" value="TreeGrafter"/>
</dbReference>
<dbReference type="GO" id="GO:0003735">
    <property type="term" value="F:structural constituent of ribosome"/>
    <property type="evidence" value="ECO:0007669"/>
    <property type="project" value="InterPro"/>
</dbReference>
<dbReference type="GO" id="GO:0006412">
    <property type="term" value="P:translation"/>
    <property type="evidence" value="ECO:0007669"/>
    <property type="project" value="UniProtKB-UniRule"/>
</dbReference>
<dbReference type="FunFam" id="3.90.1030.10:FF:000002">
    <property type="entry name" value="50S ribosomal protein L17"/>
    <property type="match status" value="1"/>
</dbReference>
<dbReference type="Gene3D" id="3.90.1030.10">
    <property type="entry name" value="Ribosomal protein L17"/>
    <property type="match status" value="1"/>
</dbReference>
<dbReference type="HAMAP" id="MF_01368">
    <property type="entry name" value="Ribosomal_bL17"/>
    <property type="match status" value="1"/>
</dbReference>
<dbReference type="InterPro" id="IPR000456">
    <property type="entry name" value="Ribosomal_bL17"/>
</dbReference>
<dbReference type="InterPro" id="IPR047859">
    <property type="entry name" value="Ribosomal_bL17_CS"/>
</dbReference>
<dbReference type="InterPro" id="IPR036373">
    <property type="entry name" value="Ribosomal_bL17_sf"/>
</dbReference>
<dbReference type="NCBIfam" id="TIGR00059">
    <property type="entry name" value="L17"/>
    <property type="match status" value="1"/>
</dbReference>
<dbReference type="PANTHER" id="PTHR14413:SF16">
    <property type="entry name" value="LARGE RIBOSOMAL SUBUNIT PROTEIN BL17M"/>
    <property type="match status" value="1"/>
</dbReference>
<dbReference type="PANTHER" id="PTHR14413">
    <property type="entry name" value="RIBOSOMAL PROTEIN L17"/>
    <property type="match status" value="1"/>
</dbReference>
<dbReference type="Pfam" id="PF01196">
    <property type="entry name" value="Ribosomal_L17"/>
    <property type="match status" value="1"/>
</dbReference>
<dbReference type="SUPFAM" id="SSF64263">
    <property type="entry name" value="Prokaryotic ribosomal protein L17"/>
    <property type="match status" value="1"/>
</dbReference>
<dbReference type="PROSITE" id="PS01167">
    <property type="entry name" value="RIBOSOMAL_L17"/>
    <property type="match status" value="1"/>
</dbReference>
<reference key="1">
    <citation type="journal article" date="2006" name="Proc. Natl. Acad. Sci. U.S.A.">
        <title>Molecular genetic anatomy of inter- and intraserotype variation in the human bacterial pathogen group A Streptococcus.</title>
        <authorList>
            <person name="Beres S.B."/>
            <person name="Richter E.W."/>
            <person name="Nagiec M.J."/>
            <person name="Sumby P."/>
            <person name="Porcella S.F."/>
            <person name="DeLeo F.R."/>
            <person name="Musser J.M."/>
        </authorList>
    </citation>
    <scope>NUCLEOTIDE SEQUENCE [LARGE SCALE GENOMIC DNA]</scope>
    <source>
        <strain>MGAS9429</strain>
    </source>
</reference>
<organism>
    <name type="scientific">Streptococcus pyogenes serotype M12 (strain MGAS9429)</name>
    <dbReference type="NCBI Taxonomy" id="370551"/>
    <lineage>
        <taxon>Bacteria</taxon>
        <taxon>Bacillati</taxon>
        <taxon>Bacillota</taxon>
        <taxon>Bacilli</taxon>
        <taxon>Lactobacillales</taxon>
        <taxon>Streptococcaceae</taxon>
        <taxon>Streptococcus</taxon>
    </lineage>
</organism>
<accession>Q1JNZ0</accession>
<protein>
    <recommendedName>
        <fullName evidence="1">Large ribosomal subunit protein bL17</fullName>
    </recommendedName>
    <alternativeName>
        <fullName evidence="2">50S ribosomal protein L17</fullName>
    </alternativeName>
</protein>